<organism>
    <name type="scientific">Bos taurus</name>
    <name type="common">Bovine</name>
    <dbReference type="NCBI Taxonomy" id="9913"/>
    <lineage>
        <taxon>Eukaryota</taxon>
        <taxon>Metazoa</taxon>
        <taxon>Chordata</taxon>
        <taxon>Craniata</taxon>
        <taxon>Vertebrata</taxon>
        <taxon>Euteleostomi</taxon>
        <taxon>Mammalia</taxon>
        <taxon>Eutheria</taxon>
        <taxon>Laurasiatheria</taxon>
        <taxon>Artiodactyla</taxon>
        <taxon>Ruminantia</taxon>
        <taxon>Pecora</taxon>
        <taxon>Bovidae</taxon>
        <taxon>Bovinae</taxon>
        <taxon>Bos</taxon>
    </lineage>
</organism>
<name>SEC13_BOVIN</name>
<protein>
    <recommendedName>
        <fullName evidence="3">Protein SEC13 homolog</fullName>
    </recommendedName>
    <alternativeName>
        <fullName evidence="3">GATOR2 complex protein SEC13</fullName>
    </alternativeName>
    <alternativeName>
        <fullName>SEC13-like protein 1</fullName>
    </alternativeName>
</protein>
<sequence length="322" mass="35472">MVSVINTVDTSHEDMIHDAQMDYYGTRLATCSSDRSVKIFDVRNGGQILVADLRGHEGPVWQVAWAHPMYGNILASCSYDRKVIIWKEENGTWEKTHEHTGHDSSVNSVCWAPHDYGLILACGSSDGAISLLTYTGLGQWEVKKINNAHTIGCNAVSWAPAVVPGSLIDQPSGQKPNYIKKFASGGCDNLIKLWKEEEDGQWKEEQKLEAHSDWVRDVAWAPSIGLPTSTIASCSQDGRVFVWTCDDASGNTWSPKLLHKFNDVVWHVSWSITANILAVSGGDNKVTLWKESVDGQWVCISDVNKGQGPVSTSVTEGQQNDQ</sequence>
<evidence type="ECO:0000250" key="1">
    <source>
        <dbReference type="UniProtKB" id="P55735"/>
    </source>
</evidence>
<evidence type="ECO:0000250" key="2">
    <source>
        <dbReference type="UniProtKB" id="Q9D1M0"/>
    </source>
</evidence>
<evidence type="ECO:0000305" key="3"/>
<feature type="initiator methionine" description="Removed" evidence="1">
    <location>
        <position position="1"/>
    </location>
</feature>
<feature type="chain" id="PRO_0000281769" description="Protein SEC13 homolog">
    <location>
        <begin position="2"/>
        <end position="322"/>
    </location>
</feature>
<feature type="repeat" description="WD 1">
    <location>
        <begin position="11"/>
        <end position="50"/>
    </location>
</feature>
<feature type="repeat" description="WD 2">
    <location>
        <begin position="55"/>
        <end position="96"/>
    </location>
</feature>
<feature type="repeat" description="WD 3">
    <location>
        <begin position="101"/>
        <end position="144"/>
    </location>
</feature>
<feature type="repeat" description="WD 4">
    <location>
        <begin position="148"/>
        <end position="204"/>
    </location>
</feature>
<feature type="repeat" description="WD 5">
    <location>
        <begin position="210"/>
        <end position="253"/>
    </location>
</feature>
<feature type="repeat" description="WD 6">
    <location>
        <begin position="260"/>
        <end position="299"/>
    </location>
</feature>
<feature type="modified residue" description="N-acetylvaline" evidence="1">
    <location>
        <position position="2"/>
    </location>
</feature>
<feature type="modified residue" description="Phosphoserine" evidence="1">
    <location>
        <position position="184"/>
    </location>
</feature>
<gene>
    <name type="primary">SEC13</name>
    <name type="synonym">SEC13L1</name>
</gene>
<reference key="1">
    <citation type="submission" date="2005-08" db="EMBL/GenBank/DDBJ databases">
        <authorList>
            <consortium name="NIH - Mammalian Gene Collection (MGC) project"/>
        </authorList>
    </citation>
    <scope>NUCLEOTIDE SEQUENCE [LARGE SCALE MRNA]</scope>
    <source>
        <strain>Crossbred X Angus</strain>
        <tissue>Ileum</tissue>
    </source>
</reference>
<accession>Q3ZCC9</accession>
<dbReference type="EMBL" id="BC102514">
    <property type="protein sequence ID" value="AAI02515.1"/>
    <property type="molecule type" value="mRNA"/>
</dbReference>
<dbReference type="RefSeq" id="NP_001069033.1">
    <property type="nucleotide sequence ID" value="NM_001075565.2"/>
</dbReference>
<dbReference type="SMR" id="Q3ZCC9"/>
<dbReference type="FunCoup" id="Q3ZCC9">
    <property type="interactions" value="4057"/>
</dbReference>
<dbReference type="STRING" id="9913.ENSBTAP00000023702"/>
<dbReference type="PaxDb" id="9913-ENSBTAP00000023702"/>
<dbReference type="PeptideAtlas" id="Q3ZCC9"/>
<dbReference type="Ensembl" id="ENSBTAT00000023702.6">
    <property type="protein sequence ID" value="ENSBTAP00000023702.5"/>
    <property type="gene ID" value="ENSBTAG00000017825.7"/>
</dbReference>
<dbReference type="GeneID" id="512530"/>
<dbReference type="KEGG" id="bta:512530"/>
<dbReference type="CTD" id="6396"/>
<dbReference type="VEuPathDB" id="HostDB:ENSBTAG00000017825"/>
<dbReference type="VGNC" id="VGNC:34403">
    <property type="gene designation" value="SEC13"/>
</dbReference>
<dbReference type="eggNOG" id="KOG1332">
    <property type="taxonomic scope" value="Eukaryota"/>
</dbReference>
<dbReference type="GeneTree" id="ENSGT00940000153393"/>
<dbReference type="HOGENOM" id="CLU_032441_0_1_1"/>
<dbReference type="InParanoid" id="Q3ZCC9"/>
<dbReference type="OMA" id="IWKEEGD"/>
<dbReference type="OrthoDB" id="364224at2759"/>
<dbReference type="TreeFam" id="TF300815"/>
<dbReference type="Reactome" id="R-BTA-141444">
    <property type="pathway name" value="Amplification of signal from unattached kinetochores via a MAD2 inhibitory signal"/>
</dbReference>
<dbReference type="Reactome" id="R-BTA-159227">
    <property type="pathway name" value="Transport of the SLBP independent Mature mRNA"/>
</dbReference>
<dbReference type="Reactome" id="R-BTA-159230">
    <property type="pathway name" value="Transport of the SLBP Dependant Mature mRNA"/>
</dbReference>
<dbReference type="Reactome" id="R-BTA-159231">
    <property type="pathway name" value="Transport of Mature mRNA Derived from an Intronless Transcript"/>
</dbReference>
<dbReference type="Reactome" id="R-BTA-159236">
    <property type="pathway name" value="Transport of Mature mRNA derived from an Intron-Containing Transcript"/>
</dbReference>
<dbReference type="Reactome" id="R-BTA-191859">
    <property type="pathway name" value="snRNP Assembly"/>
</dbReference>
<dbReference type="Reactome" id="R-BTA-204005">
    <property type="pathway name" value="COPII-mediated vesicle transport"/>
</dbReference>
<dbReference type="Reactome" id="R-BTA-2132295">
    <property type="pathway name" value="MHC class II antigen presentation"/>
</dbReference>
<dbReference type="Reactome" id="R-BTA-2467813">
    <property type="pathway name" value="Separation of Sister Chromatids"/>
</dbReference>
<dbReference type="Reactome" id="R-BTA-2500257">
    <property type="pathway name" value="Resolution of Sister Chromatid Cohesion"/>
</dbReference>
<dbReference type="Reactome" id="R-BTA-3108214">
    <property type="pathway name" value="SUMOylation of DNA damage response and repair proteins"/>
</dbReference>
<dbReference type="Reactome" id="R-BTA-3232142">
    <property type="pathway name" value="SUMOylation of ubiquitinylation proteins"/>
</dbReference>
<dbReference type="Reactome" id="R-BTA-3301854">
    <property type="pathway name" value="Nuclear Pore Complex (NPC) Disassembly"/>
</dbReference>
<dbReference type="Reactome" id="R-BTA-3371453">
    <property type="pathway name" value="Regulation of HSF1-mediated heat shock response"/>
</dbReference>
<dbReference type="Reactome" id="R-BTA-4085377">
    <property type="pathway name" value="SUMOylation of SUMOylation proteins"/>
</dbReference>
<dbReference type="Reactome" id="R-BTA-4551638">
    <property type="pathway name" value="SUMOylation of chromatin organization proteins"/>
</dbReference>
<dbReference type="Reactome" id="R-BTA-4570464">
    <property type="pathway name" value="SUMOylation of RNA binding proteins"/>
</dbReference>
<dbReference type="Reactome" id="R-BTA-5578749">
    <property type="pathway name" value="Transcriptional regulation by small RNAs"/>
</dbReference>
<dbReference type="Reactome" id="R-BTA-5663220">
    <property type="pathway name" value="RHO GTPases Activate Formins"/>
</dbReference>
<dbReference type="Reactome" id="R-BTA-68877">
    <property type="pathway name" value="Mitotic Prometaphase"/>
</dbReference>
<dbReference type="Reactome" id="R-BTA-9615933">
    <property type="pathway name" value="Postmitotic nuclear pore complex (NPC) reformation"/>
</dbReference>
<dbReference type="Reactome" id="R-BTA-9639288">
    <property type="pathway name" value="Amino acids regulate mTORC1"/>
</dbReference>
<dbReference type="Reactome" id="R-BTA-9648025">
    <property type="pathway name" value="EML4 and NUDC in mitotic spindle formation"/>
</dbReference>
<dbReference type="Reactome" id="R-BTA-983170">
    <property type="pathway name" value="Antigen Presentation: Folding, assembly and peptide loading of class I MHC"/>
</dbReference>
<dbReference type="Proteomes" id="UP000009136">
    <property type="component" value="Chromosome 22"/>
</dbReference>
<dbReference type="Bgee" id="ENSBTAG00000017825">
    <property type="expression patterns" value="Expressed in saliva-secreting gland and 108 other cell types or tissues"/>
</dbReference>
<dbReference type="GO" id="GO:0030127">
    <property type="term" value="C:COPII vesicle coat"/>
    <property type="evidence" value="ECO:0000318"/>
    <property type="project" value="GO_Central"/>
</dbReference>
<dbReference type="GO" id="GO:0005789">
    <property type="term" value="C:endoplasmic reticulum membrane"/>
    <property type="evidence" value="ECO:0007669"/>
    <property type="project" value="UniProtKB-SubCell"/>
</dbReference>
<dbReference type="GO" id="GO:0061700">
    <property type="term" value="C:GATOR2 complex"/>
    <property type="evidence" value="ECO:0000250"/>
    <property type="project" value="UniProtKB"/>
</dbReference>
<dbReference type="GO" id="GO:0005765">
    <property type="term" value="C:lysosomal membrane"/>
    <property type="evidence" value="ECO:0000250"/>
    <property type="project" value="UniProtKB"/>
</dbReference>
<dbReference type="GO" id="GO:0031080">
    <property type="term" value="C:nuclear pore outer ring"/>
    <property type="evidence" value="ECO:0000250"/>
    <property type="project" value="UniProtKB"/>
</dbReference>
<dbReference type="GO" id="GO:0005198">
    <property type="term" value="F:structural molecule activity"/>
    <property type="evidence" value="ECO:0000318"/>
    <property type="project" value="GO_Central"/>
</dbReference>
<dbReference type="GO" id="GO:0031669">
    <property type="term" value="P:cellular response to nutrient levels"/>
    <property type="evidence" value="ECO:0000250"/>
    <property type="project" value="UniProtKB"/>
</dbReference>
<dbReference type="GO" id="GO:0090114">
    <property type="term" value="P:COPII-coated vesicle budding"/>
    <property type="evidence" value="ECO:0000318"/>
    <property type="project" value="GO_Central"/>
</dbReference>
<dbReference type="GO" id="GO:0051028">
    <property type="term" value="P:mRNA transport"/>
    <property type="evidence" value="ECO:0007669"/>
    <property type="project" value="UniProtKB-KW"/>
</dbReference>
<dbReference type="GO" id="GO:0032008">
    <property type="term" value="P:positive regulation of TOR signaling"/>
    <property type="evidence" value="ECO:0000318"/>
    <property type="project" value="GO_Central"/>
</dbReference>
<dbReference type="GO" id="GO:1904263">
    <property type="term" value="P:positive regulation of TORC1 signaling"/>
    <property type="evidence" value="ECO:0000250"/>
    <property type="project" value="UniProtKB"/>
</dbReference>
<dbReference type="GO" id="GO:0032527">
    <property type="term" value="P:protein exit from endoplasmic reticulum"/>
    <property type="evidence" value="ECO:0000250"/>
    <property type="project" value="UniProtKB"/>
</dbReference>
<dbReference type="GO" id="GO:0006606">
    <property type="term" value="P:protein import into nucleus"/>
    <property type="evidence" value="ECO:0000318"/>
    <property type="project" value="GO_Central"/>
</dbReference>
<dbReference type="GO" id="GO:0072659">
    <property type="term" value="P:protein localization to plasma membrane"/>
    <property type="evidence" value="ECO:0000250"/>
    <property type="project" value="UniProtKB"/>
</dbReference>
<dbReference type="FunFam" id="2.130.10.10:FF:000017">
    <property type="entry name" value="SEC13 homolog (S. cerevisiae)"/>
    <property type="match status" value="1"/>
</dbReference>
<dbReference type="Gene3D" id="2.130.10.10">
    <property type="entry name" value="YVTN repeat-like/Quinoprotein amine dehydrogenase"/>
    <property type="match status" value="1"/>
</dbReference>
<dbReference type="InterPro" id="IPR037363">
    <property type="entry name" value="Sec13/Seh1_fam"/>
</dbReference>
<dbReference type="InterPro" id="IPR015943">
    <property type="entry name" value="WD40/YVTN_repeat-like_dom_sf"/>
</dbReference>
<dbReference type="InterPro" id="IPR036322">
    <property type="entry name" value="WD40_repeat_dom_sf"/>
</dbReference>
<dbReference type="InterPro" id="IPR001680">
    <property type="entry name" value="WD40_rpt"/>
</dbReference>
<dbReference type="PANTHER" id="PTHR11024">
    <property type="entry name" value="NUCLEAR PORE COMPLEX PROTEIN SEC13 / SEH1 FAMILY MEMBER"/>
    <property type="match status" value="1"/>
</dbReference>
<dbReference type="PANTHER" id="PTHR11024:SF2">
    <property type="entry name" value="PROTEIN SEC13 HOMOLOG"/>
    <property type="match status" value="1"/>
</dbReference>
<dbReference type="Pfam" id="PF00400">
    <property type="entry name" value="WD40"/>
    <property type="match status" value="5"/>
</dbReference>
<dbReference type="SMART" id="SM00320">
    <property type="entry name" value="WD40"/>
    <property type="match status" value="6"/>
</dbReference>
<dbReference type="SUPFAM" id="SSF50978">
    <property type="entry name" value="WD40 repeat-like"/>
    <property type="match status" value="1"/>
</dbReference>
<dbReference type="PROSITE" id="PS50082">
    <property type="entry name" value="WD_REPEATS_2"/>
    <property type="match status" value="3"/>
</dbReference>
<dbReference type="PROSITE" id="PS50294">
    <property type="entry name" value="WD_REPEATS_REGION"/>
    <property type="match status" value="1"/>
</dbReference>
<proteinExistence type="evidence at transcript level"/>
<comment type="function">
    <text evidence="1 2">Functions as a component of the nuclear pore complex (NPC) and the COPII coat. At the endoplasmic reticulum, SEC13 is involved in the biogenesis of COPII-coated vesicles (By similarity). Required for the exit of adipsin (CFD/ADN), an adipocyte-secreted protein from the endoplasmic reticulum (By similarity).</text>
</comment>
<comment type="function">
    <text evidence="1">As a component of the GATOR2 complex, functions as an activator of the amino acid-sensing branch of the mTORC1 signaling pathway. The GATOR2 complex indirectly activates mTORC1 through the inhibition of the GATOR1 subcomplex. GATOR2 probably acts as an E3 ubiquitin-protein ligase toward GATOR1. In the presence of abundant amino acids, the GATOR2 complex mediates ubiquitination of the NPRL2 core component of the GATOR1 complex, leading to GATOR1 inactivation. In the absence of amino acids, GATOR2 is inhibited, activating the GATOR1 complex. Within the GATOR2 complex, SEC13 and SEH1L are required to stabilize the complex.</text>
</comment>
<comment type="activity regulation">
    <text evidence="1">The GATOR2 complex is negatively regulated by the upstream amino acid sensors CASTOR1 and SESN2, which sequester the GATOR2 complex in absence of amino acids. In the presence of abundant amino acids, GATOR2 is released from CASTOR1 and SESN2 and activated.</text>
</comment>
<comment type="subunit">
    <text evidence="1">At the nuclear pore: component of the Y-shaped Nup107-160 subcomplex of the nuclear pore complex (NPC). The Nup107-160 subcomplex includes NUP160, NUP133, NUP107, NUP98, NUP85, NUP43, NUP37, SEH1 and SEC13. At the COPII coat complex: interacts with SEC31A and SEC31B. Interacts with SEC16A. Interacts with SEC16B. Component of the GATOR2 subcomplex, composed of MIOS, SEC13, SEH1L, WDR24 and WDR59. The GATOR2 complex interacts with CASTOR1 and CASTOR2; the interaction is negatively regulated by arginine. The GATOR2 complex interacts with SESN1, SESN2 and SESN3; the interaction is negatively regulated by amino acids.</text>
</comment>
<comment type="subcellular location">
    <subcellularLocation>
        <location evidence="1">Cytoplasmic vesicle</location>
        <location evidence="1">COPII-coated vesicle membrane</location>
        <topology evidence="1">Peripheral membrane protein</topology>
        <orientation evidence="1">Cytoplasmic side</orientation>
    </subcellularLocation>
    <subcellularLocation>
        <location evidence="1">Endoplasmic reticulum membrane</location>
        <topology evidence="1">Peripheral membrane protein</topology>
        <orientation evidence="1">Cytoplasmic side</orientation>
    </subcellularLocation>
    <subcellularLocation>
        <location evidence="1">Nucleus</location>
        <location evidence="1">Nuclear pore complex</location>
    </subcellularLocation>
    <subcellularLocation>
        <location evidence="1">Lysosome membrane</location>
    </subcellularLocation>
    <text evidence="1">In interphase, localizes at both sides of the NPC.</text>
</comment>
<comment type="similarity">
    <text evidence="3">Belongs to the WD repeat SEC13 family.</text>
</comment>
<keyword id="KW-0007">Acetylation</keyword>
<keyword id="KW-0968">Cytoplasmic vesicle</keyword>
<keyword id="KW-0256">Endoplasmic reticulum</keyword>
<keyword id="KW-0931">ER-Golgi transport</keyword>
<keyword id="KW-0458">Lysosome</keyword>
<keyword id="KW-0472">Membrane</keyword>
<keyword id="KW-0509">mRNA transport</keyword>
<keyword id="KW-0906">Nuclear pore complex</keyword>
<keyword id="KW-0539">Nucleus</keyword>
<keyword id="KW-0597">Phosphoprotein</keyword>
<keyword id="KW-0653">Protein transport</keyword>
<keyword id="KW-1185">Reference proteome</keyword>
<keyword id="KW-0677">Repeat</keyword>
<keyword id="KW-0811">Translocation</keyword>
<keyword id="KW-0813">Transport</keyword>
<keyword id="KW-0853">WD repeat</keyword>